<keyword id="KW-0963">Cytoplasm</keyword>
<keyword id="KW-0275">Fatty acid biosynthesis</keyword>
<keyword id="KW-0276">Fatty acid metabolism</keyword>
<keyword id="KW-0444">Lipid biosynthesis</keyword>
<keyword id="KW-0443">Lipid metabolism</keyword>
<keyword id="KW-0460">Magnesium</keyword>
<keyword id="KW-0479">Metal-binding</keyword>
<keyword id="KW-1185">Reference proteome</keyword>
<keyword id="KW-0808">Transferase</keyword>
<evidence type="ECO:0000255" key="1">
    <source>
        <dbReference type="HAMAP-Rule" id="MF_00101"/>
    </source>
</evidence>
<proteinExistence type="inferred from homology"/>
<accession>Q73LF7</accession>
<protein>
    <recommendedName>
        <fullName evidence="1">Holo-[acyl-carrier-protein] synthase</fullName>
        <shortName evidence="1">Holo-ACP synthase</shortName>
        <ecNumber evidence="1">2.7.8.7</ecNumber>
    </recommendedName>
    <alternativeName>
        <fullName evidence="1">4'-phosphopantetheinyl transferase AcpS</fullName>
    </alternativeName>
</protein>
<sequence>MILGLGIDIVEVSRLEKWLNDKKLLERFFNKEELEYVLSKRDGAAPSLAVRFAAKEAFGKALGTGLAGIELKDIAVANDKTGRPFLELFGTALQALKEKGGASIHLSLTHEKTTAAAVVIIEG</sequence>
<reference key="1">
    <citation type="journal article" date="2004" name="Proc. Natl. Acad. Sci. U.S.A.">
        <title>Comparison of the genome of the oral pathogen Treponema denticola with other spirochete genomes.</title>
        <authorList>
            <person name="Seshadri R."/>
            <person name="Myers G.S.A."/>
            <person name="Tettelin H."/>
            <person name="Eisen J.A."/>
            <person name="Heidelberg J.F."/>
            <person name="Dodson R.J."/>
            <person name="Davidsen T.M."/>
            <person name="DeBoy R.T."/>
            <person name="Fouts D.E."/>
            <person name="Haft D.H."/>
            <person name="Selengut J."/>
            <person name="Ren Q."/>
            <person name="Brinkac L.M."/>
            <person name="Madupu R."/>
            <person name="Kolonay J.F."/>
            <person name="Durkin S.A."/>
            <person name="Daugherty S.C."/>
            <person name="Shetty J."/>
            <person name="Shvartsbeyn A."/>
            <person name="Gebregeorgis E."/>
            <person name="Geer K."/>
            <person name="Tsegaye G."/>
            <person name="Malek J.A."/>
            <person name="Ayodeji B."/>
            <person name="Shatsman S."/>
            <person name="McLeod M.P."/>
            <person name="Smajs D."/>
            <person name="Howell J.K."/>
            <person name="Pal S."/>
            <person name="Amin A."/>
            <person name="Vashisth P."/>
            <person name="McNeill T.Z."/>
            <person name="Xiang Q."/>
            <person name="Sodergren E."/>
            <person name="Baca E."/>
            <person name="Weinstock G.M."/>
            <person name="Norris S.J."/>
            <person name="Fraser C.M."/>
            <person name="Paulsen I.T."/>
        </authorList>
    </citation>
    <scope>NUCLEOTIDE SEQUENCE [LARGE SCALE GENOMIC DNA]</scope>
    <source>
        <strain>ATCC 35405 / DSM 14222 / CIP 103919 / JCM 8153 / KCTC 15104</strain>
    </source>
</reference>
<organism>
    <name type="scientific">Treponema denticola (strain ATCC 35405 / DSM 14222 / CIP 103919 / JCM 8153 / KCTC 15104)</name>
    <dbReference type="NCBI Taxonomy" id="243275"/>
    <lineage>
        <taxon>Bacteria</taxon>
        <taxon>Pseudomonadati</taxon>
        <taxon>Spirochaetota</taxon>
        <taxon>Spirochaetia</taxon>
        <taxon>Spirochaetales</taxon>
        <taxon>Treponemataceae</taxon>
        <taxon>Treponema</taxon>
    </lineage>
</organism>
<feature type="chain" id="PRO_0000175723" description="Holo-[acyl-carrier-protein] synthase">
    <location>
        <begin position="1"/>
        <end position="123"/>
    </location>
</feature>
<feature type="binding site" evidence="1">
    <location>
        <position position="8"/>
    </location>
    <ligand>
        <name>Mg(2+)</name>
        <dbReference type="ChEBI" id="CHEBI:18420"/>
    </ligand>
</feature>
<feature type="binding site" evidence="1">
    <location>
        <position position="56"/>
    </location>
    <ligand>
        <name>Mg(2+)</name>
        <dbReference type="ChEBI" id="CHEBI:18420"/>
    </ligand>
</feature>
<dbReference type="EC" id="2.7.8.7" evidence="1"/>
<dbReference type="EMBL" id="AE017226">
    <property type="protein sequence ID" value="AAS12421.1"/>
    <property type="molecule type" value="Genomic_DNA"/>
</dbReference>
<dbReference type="RefSeq" id="NP_972510.1">
    <property type="nucleotide sequence ID" value="NC_002967.9"/>
</dbReference>
<dbReference type="RefSeq" id="WP_002679605.1">
    <property type="nucleotide sequence ID" value="NC_002967.9"/>
</dbReference>
<dbReference type="SMR" id="Q73LF7"/>
<dbReference type="STRING" id="243275.TDE_1907"/>
<dbReference type="PaxDb" id="243275-TDE_1907"/>
<dbReference type="GeneID" id="2740405"/>
<dbReference type="KEGG" id="tde:TDE_1907"/>
<dbReference type="PATRIC" id="fig|243275.7.peg.1805"/>
<dbReference type="eggNOG" id="COG0736">
    <property type="taxonomic scope" value="Bacteria"/>
</dbReference>
<dbReference type="HOGENOM" id="CLU_089696_0_2_12"/>
<dbReference type="OrthoDB" id="517356at2"/>
<dbReference type="Proteomes" id="UP000008212">
    <property type="component" value="Chromosome"/>
</dbReference>
<dbReference type="GO" id="GO:0005737">
    <property type="term" value="C:cytoplasm"/>
    <property type="evidence" value="ECO:0007669"/>
    <property type="project" value="UniProtKB-SubCell"/>
</dbReference>
<dbReference type="GO" id="GO:0008897">
    <property type="term" value="F:holo-[acyl-carrier-protein] synthase activity"/>
    <property type="evidence" value="ECO:0007669"/>
    <property type="project" value="UniProtKB-UniRule"/>
</dbReference>
<dbReference type="GO" id="GO:0000287">
    <property type="term" value="F:magnesium ion binding"/>
    <property type="evidence" value="ECO:0007669"/>
    <property type="project" value="UniProtKB-UniRule"/>
</dbReference>
<dbReference type="GO" id="GO:0006633">
    <property type="term" value="P:fatty acid biosynthetic process"/>
    <property type="evidence" value="ECO:0007669"/>
    <property type="project" value="UniProtKB-UniRule"/>
</dbReference>
<dbReference type="Gene3D" id="3.90.470.20">
    <property type="entry name" value="4'-phosphopantetheinyl transferase domain"/>
    <property type="match status" value="1"/>
</dbReference>
<dbReference type="HAMAP" id="MF_00101">
    <property type="entry name" value="AcpS"/>
    <property type="match status" value="1"/>
</dbReference>
<dbReference type="InterPro" id="IPR008278">
    <property type="entry name" value="4-PPantetheinyl_Trfase_dom"/>
</dbReference>
<dbReference type="InterPro" id="IPR037143">
    <property type="entry name" value="4-PPantetheinyl_Trfase_dom_sf"/>
</dbReference>
<dbReference type="InterPro" id="IPR002582">
    <property type="entry name" value="ACPS"/>
</dbReference>
<dbReference type="InterPro" id="IPR004568">
    <property type="entry name" value="Ppantetheine-prot_Trfase_dom"/>
</dbReference>
<dbReference type="NCBIfam" id="TIGR00516">
    <property type="entry name" value="acpS"/>
    <property type="match status" value="1"/>
</dbReference>
<dbReference type="NCBIfam" id="TIGR00556">
    <property type="entry name" value="pantethn_trn"/>
    <property type="match status" value="1"/>
</dbReference>
<dbReference type="NCBIfam" id="NF000832">
    <property type="entry name" value="PRK00070.3-2"/>
    <property type="match status" value="1"/>
</dbReference>
<dbReference type="Pfam" id="PF01648">
    <property type="entry name" value="ACPS"/>
    <property type="match status" value="1"/>
</dbReference>
<dbReference type="SUPFAM" id="SSF56214">
    <property type="entry name" value="4'-phosphopantetheinyl transferase"/>
    <property type="match status" value="1"/>
</dbReference>
<comment type="function">
    <text evidence="1">Transfers the 4'-phosphopantetheine moiety from coenzyme A to a Ser of acyl-carrier-protein.</text>
</comment>
<comment type="catalytic activity">
    <reaction evidence="1">
        <text>apo-[ACP] + CoA = holo-[ACP] + adenosine 3',5'-bisphosphate + H(+)</text>
        <dbReference type="Rhea" id="RHEA:12068"/>
        <dbReference type="Rhea" id="RHEA-COMP:9685"/>
        <dbReference type="Rhea" id="RHEA-COMP:9690"/>
        <dbReference type="ChEBI" id="CHEBI:15378"/>
        <dbReference type="ChEBI" id="CHEBI:29999"/>
        <dbReference type="ChEBI" id="CHEBI:57287"/>
        <dbReference type="ChEBI" id="CHEBI:58343"/>
        <dbReference type="ChEBI" id="CHEBI:64479"/>
        <dbReference type="EC" id="2.7.8.7"/>
    </reaction>
</comment>
<comment type="cofactor">
    <cofactor evidence="1">
        <name>Mg(2+)</name>
        <dbReference type="ChEBI" id="CHEBI:18420"/>
    </cofactor>
</comment>
<comment type="subcellular location">
    <subcellularLocation>
        <location evidence="1">Cytoplasm</location>
    </subcellularLocation>
</comment>
<comment type="similarity">
    <text evidence="1">Belongs to the P-Pant transferase superfamily. AcpS family.</text>
</comment>
<gene>
    <name evidence="1" type="primary">acpS</name>
    <name type="ordered locus">TDE_1907</name>
</gene>
<name>ACPS_TREDE</name>